<comment type="function">
    <text evidence="1">Binds to the 23S rRNA.</text>
</comment>
<comment type="cofactor">
    <cofactor evidence="1">
        <name>Zn(2+)</name>
        <dbReference type="ChEBI" id="CHEBI:29105"/>
    </cofactor>
    <text evidence="1">Binds 1 zinc ion per subunit.</text>
</comment>
<comment type="similarity">
    <text evidence="3">Belongs to the eukaryotic ribosomal protein eL37 family.</text>
</comment>
<sequence>MSKGTPSLGKRHNKSHVLCNRCGKRSFHVQKKTCASCGYPAAKLRSHNWATKAKRRRTTGTGRMAYLKHVSRRFKNGFQTGVAKPQSA</sequence>
<organism>
    <name type="scientific">Debaryomyces hansenii (strain ATCC 36239 / CBS 767 / BCRC 21394 / JCM 1990 / NBRC 0083 / IGC 2968)</name>
    <name type="common">Yeast</name>
    <name type="synonym">Torulaspora hansenii</name>
    <dbReference type="NCBI Taxonomy" id="284592"/>
    <lineage>
        <taxon>Eukaryota</taxon>
        <taxon>Fungi</taxon>
        <taxon>Dikarya</taxon>
        <taxon>Ascomycota</taxon>
        <taxon>Saccharomycotina</taxon>
        <taxon>Pichiomycetes</taxon>
        <taxon>Debaryomycetaceae</taxon>
        <taxon>Debaryomyces</taxon>
    </lineage>
</organism>
<reference key="1">
    <citation type="journal article" date="2004" name="Nature">
        <title>Genome evolution in yeasts.</title>
        <authorList>
            <person name="Dujon B."/>
            <person name="Sherman D."/>
            <person name="Fischer G."/>
            <person name="Durrens P."/>
            <person name="Casaregola S."/>
            <person name="Lafontaine I."/>
            <person name="de Montigny J."/>
            <person name="Marck C."/>
            <person name="Neuveglise C."/>
            <person name="Talla E."/>
            <person name="Goffard N."/>
            <person name="Frangeul L."/>
            <person name="Aigle M."/>
            <person name="Anthouard V."/>
            <person name="Babour A."/>
            <person name="Barbe V."/>
            <person name="Barnay S."/>
            <person name="Blanchin S."/>
            <person name="Beckerich J.-M."/>
            <person name="Beyne E."/>
            <person name="Bleykasten C."/>
            <person name="Boisrame A."/>
            <person name="Boyer J."/>
            <person name="Cattolico L."/>
            <person name="Confanioleri F."/>
            <person name="de Daruvar A."/>
            <person name="Despons L."/>
            <person name="Fabre E."/>
            <person name="Fairhead C."/>
            <person name="Ferry-Dumazet H."/>
            <person name="Groppi A."/>
            <person name="Hantraye F."/>
            <person name="Hennequin C."/>
            <person name="Jauniaux N."/>
            <person name="Joyet P."/>
            <person name="Kachouri R."/>
            <person name="Kerrest A."/>
            <person name="Koszul R."/>
            <person name="Lemaire M."/>
            <person name="Lesur I."/>
            <person name="Ma L."/>
            <person name="Muller H."/>
            <person name="Nicaud J.-M."/>
            <person name="Nikolski M."/>
            <person name="Oztas S."/>
            <person name="Ozier-Kalogeropoulos O."/>
            <person name="Pellenz S."/>
            <person name="Potier S."/>
            <person name="Richard G.-F."/>
            <person name="Straub M.-L."/>
            <person name="Suleau A."/>
            <person name="Swennen D."/>
            <person name="Tekaia F."/>
            <person name="Wesolowski-Louvel M."/>
            <person name="Westhof E."/>
            <person name="Wirth B."/>
            <person name="Zeniou-Meyer M."/>
            <person name="Zivanovic Y."/>
            <person name="Bolotin-Fukuhara M."/>
            <person name="Thierry A."/>
            <person name="Bouchier C."/>
            <person name="Caudron B."/>
            <person name="Scarpelli C."/>
            <person name="Gaillardin C."/>
            <person name="Weissenbach J."/>
            <person name="Wincker P."/>
            <person name="Souciet J.-L."/>
        </authorList>
    </citation>
    <scope>NUCLEOTIDE SEQUENCE [LARGE SCALE GENOMIC DNA]</scope>
    <source>
        <strain>ATCC 36239 / CBS 767 / BCRC 21394 / JCM 1990 / NBRC 0083 / IGC 2968</strain>
    </source>
</reference>
<name>RL37_DEBHA</name>
<accession>Q6BPF6</accession>
<feature type="chain" id="PRO_0000370508" description="Large ribosomal subunit protein eL37">
    <location>
        <begin position="1"/>
        <end position="88"/>
    </location>
</feature>
<feature type="zinc finger region" description="C4-type" evidence="2">
    <location>
        <begin position="19"/>
        <end position="37"/>
    </location>
</feature>
<feature type="binding site" evidence="1">
    <location>
        <position position="19"/>
    </location>
    <ligand>
        <name>Zn(2+)</name>
        <dbReference type="ChEBI" id="CHEBI:29105"/>
    </ligand>
</feature>
<feature type="binding site" evidence="1">
    <location>
        <position position="22"/>
    </location>
    <ligand>
        <name>Zn(2+)</name>
        <dbReference type="ChEBI" id="CHEBI:29105"/>
    </ligand>
</feature>
<feature type="binding site" evidence="1">
    <location>
        <position position="34"/>
    </location>
    <ligand>
        <name>Zn(2+)</name>
        <dbReference type="ChEBI" id="CHEBI:29105"/>
    </ligand>
</feature>
<feature type="binding site" evidence="1">
    <location>
        <position position="37"/>
    </location>
    <ligand>
        <name>Zn(2+)</name>
        <dbReference type="ChEBI" id="CHEBI:29105"/>
    </ligand>
</feature>
<proteinExistence type="inferred from homology"/>
<gene>
    <name type="primary">RPL37</name>
    <name type="ordered locus">DEHA2E13992g</name>
</gene>
<protein>
    <recommendedName>
        <fullName evidence="3">Large ribosomal subunit protein eL37</fullName>
    </recommendedName>
    <alternativeName>
        <fullName>60S ribosomal protein L37</fullName>
    </alternativeName>
</protein>
<evidence type="ECO:0000250" key="1"/>
<evidence type="ECO:0000255" key="2"/>
<evidence type="ECO:0000305" key="3"/>
<dbReference type="EMBL" id="CR382137">
    <property type="protein sequence ID" value="CAG88156.1"/>
    <property type="molecule type" value="Genomic_DNA"/>
</dbReference>
<dbReference type="RefSeq" id="XP_459914.1">
    <property type="nucleotide sequence ID" value="XM_459914.1"/>
</dbReference>
<dbReference type="SMR" id="Q6BPF6"/>
<dbReference type="FunCoup" id="Q6BPF6">
    <property type="interactions" value="605"/>
</dbReference>
<dbReference type="STRING" id="284592.Q6BPF6"/>
<dbReference type="GeneID" id="2902961"/>
<dbReference type="KEGG" id="dha:DEHA2E13992g"/>
<dbReference type="VEuPathDB" id="FungiDB:DEHA2E13992g"/>
<dbReference type="eggNOG" id="KOG3475">
    <property type="taxonomic scope" value="Eukaryota"/>
</dbReference>
<dbReference type="HOGENOM" id="CLU_150908_0_0_1"/>
<dbReference type="InParanoid" id="Q6BPF6"/>
<dbReference type="OMA" id="RMAYLKH"/>
<dbReference type="OrthoDB" id="10259236at2759"/>
<dbReference type="Proteomes" id="UP000000599">
    <property type="component" value="Chromosome E"/>
</dbReference>
<dbReference type="GO" id="GO:0022625">
    <property type="term" value="C:cytosolic large ribosomal subunit"/>
    <property type="evidence" value="ECO:0007669"/>
    <property type="project" value="TreeGrafter"/>
</dbReference>
<dbReference type="GO" id="GO:0019843">
    <property type="term" value="F:rRNA binding"/>
    <property type="evidence" value="ECO:0007669"/>
    <property type="project" value="UniProtKB-KW"/>
</dbReference>
<dbReference type="GO" id="GO:0003735">
    <property type="term" value="F:structural constituent of ribosome"/>
    <property type="evidence" value="ECO:0007669"/>
    <property type="project" value="InterPro"/>
</dbReference>
<dbReference type="GO" id="GO:0008270">
    <property type="term" value="F:zinc ion binding"/>
    <property type="evidence" value="ECO:0007669"/>
    <property type="project" value="UniProtKB-KW"/>
</dbReference>
<dbReference type="GO" id="GO:0006412">
    <property type="term" value="P:translation"/>
    <property type="evidence" value="ECO:0007669"/>
    <property type="project" value="InterPro"/>
</dbReference>
<dbReference type="FunFam" id="2.20.25.30:FF:000001">
    <property type="entry name" value="Ribosomal protein L37"/>
    <property type="match status" value="1"/>
</dbReference>
<dbReference type="Gene3D" id="2.20.25.30">
    <property type="match status" value="1"/>
</dbReference>
<dbReference type="HAMAP" id="MF_00547">
    <property type="entry name" value="Ribosomal_eL37"/>
    <property type="match status" value="1"/>
</dbReference>
<dbReference type="InterPro" id="IPR001569">
    <property type="entry name" value="Ribosomal_eL37"/>
</dbReference>
<dbReference type="InterPro" id="IPR011331">
    <property type="entry name" value="Ribosomal_eL37/eL43"/>
</dbReference>
<dbReference type="InterPro" id="IPR018267">
    <property type="entry name" value="Ribosomal_eL37_CS"/>
</dbReference>
<dbReference type="InterPro" id="IPR011332">
    <property type="entry name" value="Ribosomal_zn-bd"/>
</dbReference>
<dbReference type="NCBIfam" id="NF003214">
    <property type="entry name" value="PRK04179.1"/>
    <property type="match status" value="1"/>
</dbReference>
<dbReference type="PANTHER" id="PTHR10768">
    <property type="entry name" value="60S RIBOSOMAL PROTEIN L37"/>
    <property type="match status" value="1"/>
</dbReference>
<dbReference type="PANTHER" id="PTHR10768:SF0">
    <property type="entry name" value="RIBOSOMAL PROTEIN L37"/>
    <property type="match status" value="1"/>
</dbReference>
<dbReference type="Pfam" id="PF01907">
    <property type="entry name" value="Ribosomal_L37e"/>
    <property type="match status" value="1"/>
</dbReference>
<dbReference type="SUPFAM" id="SSF57829">
    <property type="entry name" value="Zn-binding ribosomal proteins"/>
    <property type="match status" value="1"/>
</dbReference>
<dbReference type="PROSITE" id="PS01077">
    <property type="entry name" value="RIBOSOMAL_L37E"/>
    <property type="match status" value="1"/>
</dbReference>
<keyword id="KW-0479">Metal-binding</keyword>
<keyword id="KW-1185">Reference proteome</keyword>
<keyword id="KW-0687">Ribonucleoprotein</keyword>
<keyword id="KW-0689">Ribosomal protein</keyword>
<keyword id="KW-0694">RNA-binding</keyword>
<keyword id="KW-0699">rRNA-binding</keyword>
<keyword id="KW-0862">Zinc</keyword>
<keyword id="KW-0863">Zinc-finger</keyword>